<sequence length="357" mass="41016">MLKLVIIENMAEIMLFSLDLLLFSTDILCFNFPSKMIKLPGFITIQIFFYPQASFGISANTILFLFHIFTFVFSHRSKSIDMIISHLSLIHILLLFTQAILVSLDFFGSQNTQDDLRCKVIVFLNKVMRGLSICTPCLLNVLQAIISPSIFSLAKLKHPSASHILGFFLFSWVLNMFIGVIFCCTLWLPPVKWGQSSVCHTALFLFAHELHPQETVFHTNDFEGCHLYRVHGPLKRLHGDYFIQTIRGYLSAFTQPACPPVSPVKRASQTILLLVSFVFIYWVDFMFSFSRGVTWINDSLLVWFQVIVANSYATISPLMLIYADNQIFKTLQMLWFKYLSPPKLMLKFNRQCGSTKK</sequence>
<name>VN1R5_GORGO</name>
<dbReference type="EMBL" id="AY312475">
    <property type="protein sequence ID" value="AAP85611.1"/>
    <property type="molecule type" value="Genomic_DNA"/>
</dbReference>
<dbReference type="RefSeq" id="XP_004028761.1">
    <property type="nucleotide sequence ID" value="XM_004028712.2"/>
</dbReference>
<dbReference type="FunCoup" id="Q7YRP1">
    <property type="interactions" value="23"/>
</dbReference>
<dbReference type="GlyCosmos" id="Q7YRP1">
    <property type="glycosylation" value="1 site, No reported glycans"/>
</dbReference>
<dbReference type="Ensembl" id="ENSGGOT00000002439.3">
    <property type="protein sequence ID" value="ENSGGOP00000002388.2"/>
    <property type="gene ID" value="ENSGGOG00000002427.3"/>
</dbReference>
<dbReference type="GeneID" id="101153670"/>
<dbReference type="KEGG" id="ggo:101153670"/>
<dbReference type="eggNOG" id="ENOG502SNRJ">
    <property type="taxonomic scope" value="Eukaryota"/>
</dbReference>
<dbReference type="GeneTree" id="ENSGT01030000234553"/>
<dbReference type="HOGENOM" id="CLU_058641_0_0_1"/>
<dbReference type="InParanoid" id="Q7YRP1"/>
<dbReference type="OMA" id="CKVIVFL"/>
<dbReference type="Proteomes" id="UP000001519">
    <property type="component" value="Chromosome 1"/>
</dbReference>
<dbReference type="GO" id="GO:0005886">
    <property type="term" value="C:plasma membrane"/>
    <property type="evidence" value="ECO:0007669"/>
    <property type="project" value="UniProtKB-SubCell"/>
</dbReference>
<dbReference type="GO" id="GO:0016503">
    <property type="term" value="F:pheromone receptor activity"/>
    <property type="evidence" value="ECO:0007669"/>
    <property type="project" value="InterPro"/>
</dbReference>
<dbReference type="GO" id="GO:0019236">
    <property type="term" value="P:response to pheromone"/>
    <property type="evidence" value="ECO:0007669"/>
    <property type="project" value="UniProtKB-KW"/>
</dbReference>
<dbReference type="CDD" id="cd13949">
    <property type="entry name" value="7tm_V1R_pheromone"/>
    <property type="match status" value="1"/>
</dbReference>
<dbReference type="InterPro" id="IPR004072">
    <property type="entry name" value="Vmron_rcpt_1"/>
</dbReference>
<dbReference type="PANTHER" id="PTHR24062">
    <property type="entry name" value="VOMERONASAL TYPE-1 RECEPTOR"/>
    <property type="match status" value="1"/>
</dbReference>
<dbReference type="Pfam" id="PF03402">
    <property type="entry name" value="V1R"/>
    <property type="match status" value="1"/>
</dbReference>
<dbReference type="PRINTS" id="PR01534">
    <property type="entry name" value="VOMERONASL1R"/>
</dbReference>
<dbReference type="SUPFAM" id="SSF81321">
    <property type="entry name" value="Family A G protein-coupled receptor-like"/>
    <property type="match status" value="1"/>
</dbReference>
<keyword id="KW-1003">Cell membrane</keyword>
<keyword id="KW-0297">G-protein coupled receptor</keyword>
<keyword id="KW-0325">Glycoprotein</keyword>
<keyword id="KW-0472">Membrane</keyword>
<keyword id="KW-0589">Pheromone response</keyword>
<keyword id="KW-0675">Receptor</keyword>
<keyword id="KW-1185">Reference proteome</keyword>
<keyword id="KW-0807">Transducer</keyword>
<keyword id="KW-0812">Transmembrane</keyword>
<keyword id="KW-1133">Transmembrane helix</keyword>
<protein>
    <recommendedName>
        <fullName>Vomeronasal type-1 receptor 5</fullName>
    </recommendedName>
    <alternativeName>
        <fullName>V1r-like receptor 5</fullName>
    </alternativeName>
</protein>
<reference key="1">
    <citation type="journal article" date="2003" name="Proc. Natl. Acad. Sci. U.S.A.">
        <title>Evolutionary deterioration of the vomeronasal pheromone transduction pathway in catarrhine primates.</title>
        <authorList>
            <person name="Zhang J."/>
            <person name="Webb D.M."/>
        </authorList>
    </citation>
    <scope>NUCLEOTIDE SEQUENCE [GENOMIC DNA]</scope>
</reference>
<evidence type="ECO:0000255" key="1"/>
<evidence type="ECO:0000305" key="2"/>
<comment type="function">
    <text>Putative pheromone receptor.</text>
</comment>
<comment type="subcellular location">
    <subcellularLocation>
        <location>Cell membrane</location>
        <topology>Multi-pass membrane protein</topology>
    </subcellularLocation>
</comment>
<comment type="similarity">
    <text evidence="2">Belongs to the G-protein coupled receptor 1 family.</text>
</comment>
<proteinExistence type="inferred from homology"/>
<accession>Q7YRP1</accession>
<organism>
    <name type="scientific">Gorilla gorilla gorilla</name>
    <name type="common">Western lowland gorilla</name>
    <dbReference type="NCBI Taxonomy" id="9595"/>
    <lineage>
        <taxon>Eukaryota</taxon>
        <taxon>Metazoa</taxon>
        <taxon>Chordata</taxon>
        <taxon>Craniata</taxon>
        <taxon>Vertebrata</taxon>
        <taxon>Euteleostomi</taxon>
        <taxon>Mammalia</taxon>
        <taxon>Eutheria</taxon>
        <taxon>Euarchontoglires</taxon>
        <taxon>Primates</taxon>
        <taxon>Haplorrhini</taxon>
        <taxon>Catarrhini</taxon>
        <taxon>Hominidae</taxon>
        <taxon>Gorilla</taxon>
    </lineage>
</organism>
<feature type="chain" id="PRO_0000070219" description="Vomeronasal type-1 receptor 5">
    <location>
        <begin position="1"/>
        <end position="357"/>
    </location>
</feature>
<feature type="topological domain" description="Extracellular" evidence="1">
    <location>
        <begin position="1"/>
        <end position="3"/>
    </location>
</feature>
<feature type="transmembrane region" description="Helical; Name=1" evidence="1">
    <location>
        <begin position="4"/>
        <end position="24"/>
    </location>
</feature>
<feature type="topological domain" description="Cytoplasmic" evidence="1">
    <location>
        <begin position="25"/>
        <end position="52"/>
    </location>
</feature>
<feature type="transmembrane region" description="Helical; Name=2" evidence="1">
    <location>
        <begin position="53"/>
        <end position="73"/>
    </location>
</feature>
<feature type="topological domain" description="Extracellular" evidence="1">
    <location>
        <begin position="74"/>
        <end position="81"/>
    </location>
</feature>
<feature type="transmembrane region" description="Helical; Name=3" evidence="1">
    <location>
        <begin position="82"/>
        <end position="102"/>
    </location>
</feature>
<feature type="topological domain" description="Cytoplasmic" evidence="1">
    <location>
        <begin position="103"/>
        <end position="130"/>
    </location>
</feature>
<feature type="transmembrane region" description="Helical; Name=4" evidence="1">
    <location>
        <begin position="131"/>
        <end position="151"/>
    </location>
</feature>
<feature type="topological domain" description="Extracellular" evidence="1">
    <location>
        <begin position="152"/>
        <end position="163"/>
    </location>
</feature>
<feature type="transmembrane region" description="Helical; Name=5" evidence="1">
    <location>
        <begin position="164"/>
        <end position="184"/>
    </location>
</feature>
<feature type="topological domain" description="Cytoplasmic" evidence="1">
    <location>
        <begin position="185"/>
        <end position="269"/>
    </location>
</feature>
<feature type="transmembrane region" description="Helical; Name=6" evidence="1">
    <location>
        <begin position="270"/>
        <end position="290"/>
    </location>
</feature>
<feature type="topological domain" description="Extracellular" evidence="1">
    <location>
        <begin position="291"/>
        <end position="300"/>
    </location>
</feature>
<feature type="transmembrane region" description="Helical; Name=7" evidence="1">
    <location>
        <begin position="301"/>
        <end position="321"/>
    </location>
</feature>
<feature type="topological domain" description="Cytoplasmic" evidence="1">
    <location>
        <begin position="322"/>
        <end position="357"/>
    </location>
</feature>
<feature type="glycosylation site" description="N-linked (GlcNAc...) asparagine" evidence="1">
    <location>
        <position position="297"/>
    </location>
</feature>
<gene>
    <name type="primary">VN1R5</name>
    <name type="synonym">V1RL5</name>
</gene>